<accession>B3GZ58</accession>
<comment type="function">
    <text evidence="1">Site-specific tyrosine recombinase, which acts by catalyzing the cutting and rejoining of the recombining DNA molecules. The XerC-XerD complex is essential to convert dimers of the bacterial chromosome into monomers to permit their segregation at cell division. It also contributes to the segregational stability of plasmids.</text>
</comment>
<comment type="subunit">
    <text evidence="1">Forms a cyclic heterotetrameric complex composed of two molecules of XerC and two molecules of XerD.</text>
</comment>
<comment type="subcellular location">
    <subcellularLocation>
        <location evidence="1">Cytoplasm</location>
    </subcellularLocation>
</comment>
<comment type="similarity">
    <text evidence="1">Belongs to the 'phage' integrase family. XerC subfamily.</text>
</comment>
<keyword id="KW-0131">Cell cycle</keyword>
<keyword id="KW-0132">Cell division</keyword>
<keyword id="KW-0159">Chromosome partition</keyword>
<keyword id="KW-0963">Cytoplasm</keyword>
<keyword id="KW-0229">DNA integration</keyword>
<keyword id="KW-0233">DNA recombination</keyword>
<keyword id="KW-0238">DNA-binding</keyword>
<gene>
    <name evidence="1" type="primary">xerC</name>
    <name type="ordered locus">APP7_1892</name>
</gene>
<feature type="chain" id="PRO_1000187580" description="Tyrosine recombinase XerC">
    <location>
        <begin position="1"/>
        <end position="306"/>
    </location>
</feature>
<feature type="domain" description="Core-binding (CB)" evidence="3">
    <location>
        <begin position="6"/>
        <end position="92"/>
    </location>
</feature>
<feature type="domain" description="Tyr recombinase" evidence="2">
    <location>
        <begin position="113"/>
        <end position="292"/>
    </location>
</feature>
<feature type="active site" evidence="1">
    <location>
        <position position="152"/>
    </location>
</feature>
<feature type="active site" evidence="1">
    <location>
        <position position="176"/>
    </location>
</feature>
<feature type="active site" evidence="1">
    <location>
        <position position="244"/>
    </location>
</feature>
<feature type="active site" evidence="1">
    <location>
        <position position="247"/>
    </location>
</feature>
<feature type="active site" evidence="1">
    <location>
        <position position="270"/>
    </location>
</feature>
<feature type="active site" description="O-(3'-phospho-DNA)-tyrosine intermediate" evidence="1">
    <location>
        <position position="279"/>
    </location>
</feature>
<protein>
    <recommendedName>
        <fullName evidence="1">Tyrosine recombinase XerC</fullName>
    </recommendedName>
</protein>
<name>XERC_ACTP7</name>
<proteinExistence type="inferred from homology"/>
<sequence>MINSQNTLYLQTKPYWDYLRIEKQASQHTLSNYQRQLLAVSDMLSQAGISTWQEVNSATVRWIIAQSNKQGLGAKSIALRLVALRQWFSYLIRQEKMSVNPAVGIKAPKASKRLPKNIDAEQIGQLLTSDSHEPSDLRDLAMMELMYSSGLRLSELQGLDLGDMDLAGREVRLLGKGNKERIVPIGSKALEALNRWLAVRNQFKPQDNAVFLNKRGGRLSHRSIQLVMQKWGEKQGLESHLHPHKLRHSFATHMLEASGDLRAVQELLGHSNLATTQIYTHLDFQHLAKIYDAAHPRAKRKKQDDD</sequence>
<organism>
    <name type="scientific">Actinobacillus pleuropneumoniae serotype 7 (strain AP76)</name>
    <dbReference type="NCBI Taxonomy" id="537457"/>
    <lineage>
        <taxon>Bacteria</taxon>
        <taxon>Pseudomonadati</taxon>
        <taxon>Pseudomonadota</taxon>
        <taxon>Gammaproteobacteria</taxon>
        <taxon>Pasteurellales</taxon>
        <taxon>Pasteurellaceae</taxon>
        <taxon>Actinobacillus</taxon>
    </lineage>
</organism>
<evidence type="ECO:0000255" key="1">
    <source>
        <dbReference type="HAMAP-Rule" id="MF_01808"/>
    </source>
</evidence>
<evidence type="ECO:0000255" key="2">
    <source>
        <dbReference type="PROSITE-ProRule" id="PRU01246"/>
    </source>
</evidence>
<evidence type="ECO:0000255" key="3">
    <source>
        <dbReference type="PROSITE-ProRule" id="PRU01248"/>
    </source>
</evidence>
<dbReference type="EMBL" id="CP001091">
    <property type="protein sequence ID" value="ACE62544.1"/>
    <property type="molecule type" value="Genomic_DNA"/>
</dbReference>
<dbReference type="RefSeq" id="WP_005619426.1">
    <property type="nucleotide sequence ID" value="NC_010939.1"/>
</dbReference>
<dbReference type="SMR" id="B3GZ58"/>
<dbReference type="KEGG" id="apa:APP7_1892"/>
<dbReference type="HOGENOM" id="CLU_027562_9_0_6"/>
<dbReference type="Proteomes" id="UP000001226">
    <property type="component" value="Chromosome"/>
</dbReference>
<dbReference type="GO" id="GO:0005737">
    <property type="term" value="C:cytoplasm"/>
    <property type="evidence" value="ECO:0007669"/>
    <property type="project" value="UniProtKB-SubCell"/>
</dbReference>
<dbReference type="GO" id="GO:0003677">
    <property type="term" value="F:DNA binding"/>
    <property type="evidence" value="ECO:0007669"/>
    <property type="project" value="UniProtKB-KW"/>
</dbReference>
<dbReference type="GO" id="GO:0009037">
    <property type="term" value="F:tyrosine-based site-specific recombinase activity"/>
    <property type="evidence" value="ECO:0007669"/>
    <property type="project" value="UniProtKB-UniRule"/>
</dbReference>
<dbReference type="GO" id="GO:0051301">
    <property type="term" value="P:cell division"/>
    <property type="evidence" value="ECO:0007669"/>
    <property type="project" value="UniProtKB-KW"/>
</dbReference>
<dbReference type="GO" id="GO:0007059">
    <property type="term" value="P:chromosome segregation"/>
    <property type="evidence" value="ECO:0007669"/>
    <property type="project" value="UniProtKB-UniRule"/>
</dbReference>
<dbReference type="GO" id="GO:0006313">
    <property type="term" value="P:DNA transposition"/>
    <property type="evidence" value="ECO:0007669"/>
    <property type="project" value="UniProtKB-UniRule"/>
</dbReference>
<dbReference type="CDD" id="cd00798">
    <property type="entry name" value="INT_XerDC_C"/>
    <property type="match status" value="1"/>
</dbReference>
<dbReference type="Gene3D" id="1.10.150.130">
    <property type="match status" value="1"/>
</dbReference>
<dbReference type="Gene3D" id="1.10.443.10">
    <property type="entry name" value="Intergrase catalytic core"/>
    <property type="match status" value="1"/>
</dbReference>
<dbReference type="HAMAP" id="MF_01808">
    <property type="entry name" value="Recomb_XerC_XerD"/>
    <property type="match status" value="1"/>
</dbReference>
<dbReference type="InterPro" id="IPR044068">
    <property type="entry name" value="CB"/>
</dbReference>
<dbReference type="InterPro" id="IPR011010">
    <property type="entry name" value="DNA_brk_join_enz"/>
</dbReference>
<dbReference type="InterPro" id="IPR013762">
    <property type="entry name" value="Integrase-like_cat_sf"/>
</dbReference>
<dbReference type="InterPro" id="IPR002104">
    <property type="entry name" value="Integrase_catalytic"/>
</dbReference>
<dbReference type="InterPro" id="IPR010998">
    <property type="entry name" value="Integrase_recombinase_N"/>
</dbReference>
<dbReference type="InterPro" id="IPR004107">
    <property type="entry name" value="Integrase_SAM-like_N"/>
</dbReference>
<dbReference type="InterPro" id="IPR011931">
    <property type="entry name" value="Recomb_XerC"/>
</dbReference>
<dbReference type="InterPro" id="IPR023009">
    <property type="entry name" value="Tyrosine_recombinase_XerC/XerD"/>
</dbReference>
<dbReference type="InterPro" id="IPR050090">
    <property type="entry name" value="Tyrosine_recombinase_XerCD"/>
</dbReference>
<dbReference type="NCBIfam" id="NF001399">
    <property type="entry name" value="PRK00283.1"/>
    <property type="match status" value="1"/>
</dbReference>
<dbReference type="NCBIfam" id="TIGR02224">
    <property type="entry name" value="recomb_XerC"/>
    <property type="match status" value="1"/>
</dbReference>
<dbReference type="PANTHER" id="PTHR30349">
    <property type="entry name" value="PHAGE INTEGRASE-RELATED"/>
    <property type="match status" value="1"/>
</dbReference>
<dbReference type="PANTHER" id="PTHR30349:SF81">
    <property type="entry name" value="TYROSINE RECOMBINASE XERC"/>
    <property type="match status" value="1"/>
</dbReference>
<dbReference type="Pfam" id="PF02899">
    <property type="entry name" value="Phage_int_SAM_1"/>
    <property type="match status" value="1"/>
</dbReference>
<dbReference type="Pfam" id="PF00589">
    <property type="entry name" value="Phage_integrase"/>
    <property type="match status" value="1"/>
</dbReference>
<dbReference type="SUPFAM" id="SSF56349">
    <property type="entry name" value="DNA breaking-rejoining enzymes"/>
    <property type="match status" value="1"/>
</dbReference>
<dbReference type="SUPFAM" id="SSF47823">
    <property type="entry name" value="lambda integrase-like, N-terminal domain"/>
    <property type="match status" value="1"/>
</dbReference>
<dbReference type="PROSITE" id="PS51900">
    <property type="entry name" value="CB"/>
    <property type="match status" value="1"/>
</dbReference>
<dbReference type="PROSITE" id="PS51898">
    <property type="entry name" value="TYR_RECOMBINASE"/>
    <property type="match status" value="1"/>
</dbReference>
<reference key="1">
    <citation type="submission" date="2008-06" db="EMBL/GenBank/DDBJ databases">
        <title>Genome and proteome analysis of A. pleuropneumoniae serotype 7.</title>
        <authorList>
            <person name="Linke B."/>
            <person name="Buettner F."/>
            <person name="Martinez-Arias R."/>
            <person name="Goesmann A."/>
            <person name="Baltes N."/>
            <person name="Tegetmeyer H."/>
            <person name="Singh M."/>
            <person name="Gerlach G.F."/>
        </authorList>
    </citation>
    <scope>NUCLEOTIDE SEQUENCE [LARGE SCALE GENOMIC DNA]</scope>
    <source>
        <strain>AP76</strain>
    </source>
</reference>